<protein>
    <recommendedName>
        <fullName evidence="1">Glutamyl-tRNA reductase</fullName>
        <shortName evidence="1">GluTR</shortName>
        <ecNumber evidence="1">1.2.1.70</ecNumber>
    </recommendedName>
</protein>
<evidence type="ECO:0000255" key="1">
    <source>
        <dbReference type="HAMAP-Rule" id="MF_00087"/>
    </source>
</evidence>
<feature type="chain" id="PRO_0000114035" description="Glutamyl-tRNA reductase">
    <location>
        <begin position="1"/>
        <end position="435"/>
    </location>
</feature>
<feature type="active site" description="Nucleophile" evidence="1">
    <location>
        <position position="50"/>
    </location>
</feature>
<feature type="binding site" evidence="1">
    <location>
        <begin position="49"/>
        <end position="52"/>
    </location>
    <ligand>
        <name>substrate</name>
    </ligand>
</feature>
<feature type="binding site" evidence="1">
    <location>
        <position position="109"/>
    </location>
    <ligand>
        <name>substrate</name>
    </ligand>
</feature>
<feature type="binding site" evidence="1">
    <location>
        <begin position="114"/>
        <end position="116"/>
    </location>
    <ligand>
        <name>substrate</name>
    </ligand>
</feature>
<feature type="binding site" evidence="1">
    <location>
        <position position="120"/>
    </location>
    <ligand>
        <name>substrate</name>
    </ligand>
</feature>
<feature type="binding site" evidence="1">
    <location>
        <begin position="189"/>
        <end position="194"/>
    </location>
    <ligand>
        <name>NADP(+)</name>
        <dbReference type="ChEBI" id="CHEBI:58349"/>
    </ligand>
</feature>
<feature type="site" description="Important for activity" evidence="1">
    <location>
        <position position="99"/>
    </location>
</feature>
<organism>
    <name type="scientific">Listeria innocua serovar 6a (strain ATCC BAA-680 / CLIP 11262)</name>
    <dbReference type="NCBI Taxonomy" id="272626"/>
    <lineage>
        <taxon>Bacteria</taxon>
        <taxon>Bacillati</taxon>
        <taxon>Bacillota</taxon>
        <taxon>Bacilli</taxon>
        <taxon>Bacillales</taxon>
        <taxon>Listeriaceae</taxon>
        <taxon>Listeria</taxon>
    </lineage>
</organism>
<accession>Q92BF7</accession>
<gene>
    <name evidence="1" type="primary">hemA</name>
    <name type="ordered locus">lin1592</name>
</gene>
<reference key="1">
    <citation type="journal article" date="2001" name="Science">
        <title>Comparative genomics of Listeria species.</title>
        <authorList>
            <person name="Glaser P."/>
            <person name="Frangeul L."/>
            <person name="Buchrieser C."/>
            <person name="Rusniok C."/>
            <person name="Amend A."/>
            <person name="Baquero F."/>
            <person name="Berche P."/>
            <person name="Bloecker H."/>
            <person name="Brandt P."/>
            <person name="Chakraborty T."/>
            <person name="Charbit A."/>
            <person name="Chetouani F."/>
            <person name="Couve E."/>
            <person name="de Daruvar A."/>
            <person name="Dehoux P."/>
            <person name="Domann E."/>
            <person name="Dominguez-Bernal G."/>
            <person name="Duchaud E."/>
            <person name="Durant L."/>
            <person name="Dussurget O."/>
            <person name="Entian K.-D."/>
            <person name="Fsihi H."/>
            <person name="Garcia-del Portillo F."/>
            <person name="Garrido P."/>
            <person name="Gautier L."/>
            <person name="Goebel W."/>
            <person name="Gomez-Lopez N."/>
            <person name="Hain T."/>
            <person name="Hauf J."/>
            <person name="Jackson D."/>
            <person name="Jones L.-M."/>
            <person name="Kaerst U."/>
            <person name="Kreft J."/>
            <person name="Kuhn M."/>
            <person name="Kunst F."/>
            <person name="Kurapkat G."/>
            <person name="Madueno E."/>
            <person name="Maitournam A."/>
            <person name="Mata Vicente J."/>
            <person name="Ng E."/>
            <person name="Nedjari H."/>
            <person name="Nordsiek G."/>
            <person name="Novella S."/>
            <person name="de Pablos B."/>
            <person name="Perez-Diaz J.-C."/>
            <person name="Purcell R."/>
            <person name="Remmel B."/>
            <person name="Rose M."/>
            <person name="Schlueter T."/>
            <person name="Simoes N."/>
            <person name="Tierrez A."/>
            <person name="Vazquez-Boland J.-A."/>
            <person name="Voss H."/>
            <person name="Wehland J."/>
            <person name="Cossart P."/>
        </authorList>
    </citation>
    <scope>NUCLEOTIDE SEQUENCE [LARGE SCALE GENOMIC DNA]</scope>
    <source>
        <strain>ATCC BAA-680 / CLIP 11262</strain>
    </source>
</reference>
<sequence length="435" mass="49228">MFILTMGLNHHTAPIDIREKLVFKETEEEMALVTLLQEKSILENVIISTCNRTEIVAVVDQIHTGRYYLKRFMANWFQMDMEKIEPYLFFHEEAEAVNHLYKVTAGLDSLVLGETQILGQVKHAFEIAKQTGTTGTLLNKLFREVVTFAKKVHHHTKINENAVSVSYAAVEVAKKLYGSLDNKKIVLIGAGEMSELALQNLAGSGIADITIINRTKSNAEILAHQFQAKVGAYENMSDHLLEADIVLVSTSAEEPIIKQVAMQELMEQKASSMLVIDIGLPRNVEHDCSYIPNFHLYDIDDLAGVVSANSLERQRIVQELENTIETEVRSFFEWEKQLGVVPVIRALREKALDMQEVTMTSLENKLPGLTEREYIQIGKHMKSIINQMLKQPISELKEMSVEENADTSIEHFKRIFGLTETDVAIIEKEQAETRS</sequence>
<dbReference type="EC" id="1.2.1.70" evidence="1"/>
<dbReference type="EMBL" id="AL596169">
    <property type="protein sequence ID" value="CAC96823.1"/>
    <property type="molecule type" value="Genomic_DNA"/>
</dbReference>
<dbReference type="PIR" id="AG1631">
    <property type="entry name" value="AG1631"/>
</dbReference>
<dbReference type="RefSeq" id="WP_003771975.1">
    <property type="nucleotide sequence ID" value="NC_003212.1"/>
</dbReference>
<dbReference type="SMR" id="Q92BF7"/>
<dbReference type="STRING" id="272626.gene:17565923"/>
<dbReference type="KEGG" id="lin:hemA"/>
<dbReference type="eggNOG" id="COG0373">
    <property type="taxonomic scope" value="Bacteria"/>
</dbReference>
<dbReference type="HOGENOM" id="CLU_035113_2_2_9"/>
<dbReference type="OrthoDB" id="110209at2"/>
<dbReference type="UniPathway" id="UPA00251">
    <property type="reaction ID" value="UER00316"/>
</dbReference>
<dbReference type="Proteomes" id="UP000002513">
    <property type="component" value="Chromosome"/>
</dbReference>
<dbReference type="GO" id="GO:0008883">
    <property type="term" value="F:glutamyl-tRNA reductase activity"/>
    <property type="evidence" value="ECO:0007669"/>
    <property type="project" value="UniProtKB-UniRule"/>
</dbReference>
<dbReference type="GO" id="GO:0050661">
    <property type="term" value="F:NADP binding"/>
    <property type="evidence" value="ECO:0007669"/>
    <property type="project" value="InterPro"/>
</dbReference>
<dbReference type="GO" id="GO:0006782">
    <property type="term" value="P:protoporphyrinogen IX biosynthetic process"/>
    <property type="evidence" value="ECO:0007669"/>
    <property type="project" value="UniProtKB-UniRule"/>
</dbReference>
<dbReference type="CDD" id="cd05213">
    <property type="entry name" value="NAD_bind_Glutamyl_tRNA_reduct"/>
    <property type="match status" value="1"/>
</dbReference>
<dbReference type="FunFam" id="3.30.460.30:FF:000001">
    <property type="entry name" value="Glutamyl-tRNA reductase"/>
    <property type="match status" value="1"/>
</dbReference>
<dbReference type="FunFam" id="3.40.50.720:FF:000031">
    <property type="entry name" value="Glutamyl-tRNA reductase"/>
    <property type="match status" value="1"/>
</dbReference>
<dbReference type="Gene3D" id="3.30.460.30">
    <property type="entry name" value="Glutamyl-tRNA reductase, N-terminal domain"/>
    <property type="match status" value="1"/>
</dbReference>
<dbReference type="Gene3D" id="3.40.50.720">
    <property type="entry name" value="NAD(P)-binding Rossmann-like Domain"/>
    <property type="match status" value="1"/>
</dbReference>
<dbReference type="HAMAP" id="MF_00087">
    <property type="entry name" value="Glu_tRNA_reductase"/>
    <property type="match status" value="1"/>
</dbReference>
<dbReference type="InterPro" id="IPR000343">
    <property type="entry name" value="4pyrrol_synth_GluRdtase"/>
</dbReference>
<dbReference type="InterPro" id="IPR015896">
    <property type="entry name" value="4pyrrol_synth_GluRdtase_dimer"/>
</dbReference>
<dbReference type="InterPro" id="IPR015895">
    <property type="entry name" value="4pyrrol_synth_GluRdtase_N"/>
</dbReference>
<dbReference type="InterPro" id="IPR018214">
    <property type="entry name" value="GluRdtase_CS"/>
</dbReference>
<dbReference type="InterPro" id="IPR036453">
    <property type="entry name" value="GluRdtase_dimer_dom_sf"/>
</dbReference>
<dbReference type="InterPro" id="IPR036343">
    <property type="entry name" value="GluRdtase_N_sf"/>
</dbReference>
<dbReference type="InterPro" id="IPR036291">
    <property type="entry name" value="NAD(P)-bd_dom_sf"/>
</dbReference>
<dbReference type="InterPro" id="IPR006151">
    <property type="entry name" value="Shikm_DH/Glu-tRNA_Rdtase"/>
</dbReference>
<dbReference type="NCBIfam" id="TIGR01035">
    <property type="entry name" value="hemA"/>
    <property type="match status" value="1"/>
</dbReference>
<dbReference type="PANTHER" id="PTHR43120">
    <property type="entry name" value="GLUTAMYL-TRNA REDUCTASE 1, CHLOROPLASTIC"/>
    <property type="match status" value="1"/>
</dbReference>
<dbReference type="PANTHER" id="PTHR43120:SF1">
    <property type="entry name" value="GLUTAMYL-TRNA REDUCTASE 1, CHLOROPLASTIC"/>
    <property type="match status" value="1"/>
</dbReference>
<dbReference type="Pfam" id="PF00745">
    <property type="entry name" value="GlutR_dimer"/>
    <property type="match status" value="1"/>
</dbReference>
<dbReference type="Pfam" id="PF05201">
    <property type="entry name" value="GlutR_N"/>
    <property type="match status" value="1"/>
</dbReference>
<dbReference type="Pfam" id="PF01488">
    <property type="entry name" value="Shikimate_DH"/>
    <property type="match status" value="1"/>
</dbReference>
<dbReference type="PIRSF" id="PIRSF000445">
    <property type="entry name" value="4pyrrol_synth_GluRdtase"/>
    <property type="match status" value="1"/>
</dbReference>
<dbReference type="SUPFAM" id="SSF69742">
    <property type="entry name" value="Glutamyl tRNA-reductase catalytic, N-terminal domain"/>
    <property type="match status" value="1"/>
</dbReference>
<dbReference type="SUPFAM" id="SSF69075">
    <property type="entry name" value="Glutamyl tRNA-reductase dimerization domain"/>
    <property type="match status" value="1"/>
</dbReference>
<dbReference type="SUPFAM" id="SSF51735">
    <property type="entry name" value="NAD(P)-binding Rossmann-fold domains"/>
    <property type="match status" value="1"/>
</dbReference>
<dbReference type="PROSITE" id="PS00747">
    <property type="entry name" value="GLUTR"/>
    <property type="match status" value="1"/>
</dbReference>
<name>HEM1_LISIN</name>
<comment type="function">
    <text evidence="1">Catalyzes the NADPH-dependent reduction of glutamyl-tRNA(Glu) to glutamate 1-semialdehyde (GSA).</text>
</comment>
<comment type="catalytic activity">
    <reaction evidence="1">
        <text>(S)-4-amino-5-oxopentanoate + tRNA(Glu) + NADP(+) = L-glutamyl-tRNA(Glu) + NADPH + H(+)</text>
        <dbReference type="Rhea" id="RHEA:12344"/>
        <dbReference type="Rhea" id="RHEA-COMP:9663"/>
        <dbReference type="Rhea" id="RHEA-COMP:9680"/>
        <dbReference type="ChEBI" id="CHEBI:15378"/>
        <dbReference type="ChEBI" id="CHEBI:57501"/>
        <dbReference type="ChEBI" id="CHEBI:57783"/>
        <dbReference type="ChEBI" id="CHEBI:58349"/>
        <dbReference type="ChEBI" id="CHEBI:78442"/>
        <dbReference type="ChEBI" id="CHEBI:78520"/>
        <dbReference type="EC" id="1.2.1.70"/>
    </reaction>
</comment>
<comment type="pathway">
    <text evidence="1">Porphyrin-containing compound metabolism; protoporphyrin-IX biosynthesis; 5-aminolevulinate from L-glutamyl-tRNA(Glu): step 1/2.</text>
</comment>
<comment type="subunit">
    <text evidence="1">Homodimer.</text>
</comment>
<comment type="domain">
    <text evidence="1">Possesses an unusual extended V-shaped dimeric structure with each monomer consisting of three distinct domains arranged along a curved 'spinal' alpha-helix. The N-terminal catalytic domain specifically recognizes the glutamate moiety of the substrate. The second domain is the NADPH-binding domain, and the third C-terminal domain is responsible for dimerization.</text>
</comment>
<comment type="miscellaneous">
    <text evidence="1">During catalysis, the active site Cys acts as a nucleophile attacking the alpha-carbonyl group of tRNA-bound glutamate with the formation of a thioester intermediate between enzyme and glutamate, and the concomitant release of tRNA(Glu). The thioester intermediate is finally reduced by direct hydride transfer from NADPH, to form the product GSA.</text>
</comment>
<comment type="similarity">
    <text evidence="1">Belongs to the glutamyl-tRNA reductase family.</text>
</comment>
<keyword id="KW-0521">NADP</keyword>
<keyword id="KW-0560">Oxidoreductase</keyword>
<keyword id="KW-0627">Porphyrin biosynthesis</keyword>
<proteinExistence type="inferred from homology"/>